<comment type="similarity">
    <text evidence="1">Belongs to the UPF0223 family.</text>
</comment>
<reference key="1">
    <citation type="journal article" date="2008" name="PLoS ONE">
        <title>Genome sequence of a lancefield group C Streptococcus zooepidemicus strain causing epidemic nephritis: new information about an old disease.</title>
        <authorList>
            <person name="Beres S.B."/>
            <person name="Sesso R."/>
            <person name="Pinto S.W.L."/>
            <person name="Hoe N.P."/>
            <person name="Porcella S.F."/>
            <person name="Deleo F.R."/>
            <person name="Musser J.M."/>
        </authorList>
    </citation>
    <scope>NUCLEOTIDE SEQUENCE [LARGE SCALE GENOMIC DNA]</scope>
    <source>
        <strain>MGCS10565</strain>
    </source>
</reference>
<organism>
    <name type="scientific">Streptococcus equi subsp. zooepidemicus (strain MGCS10565)</name>
    <dbReference type="NCBI Taxonomy" id="552526"/>
    <lineage>
        <taxon>Bacteria</taxon>
        <taxon>Bacillati</taxon>
        <taxon>Bacillota</taxon>
        <taxon>Bacilli</taxon>
        <taxon>Lactobacillales</taxon>
        <taxon>Streptococcaceae</taxon>
        <taxon>Streptococcus</taxon>
    </lineage>
</organism>
<protein>
    <recommendedName>
        <fullName evidence="1">UPF0223 protein Sez_0908</fullName>
    </recommendedName>
</protein>
<dbReference type="EMBL" id="CP001129">
    <property type="protein sequence ID" value="ACG62266.1"/>
    <property type="molecule type" value="Genomic_DNA"/>
</dbReference>
<dbReference type="RefSeq" id="WP_012515537.1">
    <property type="nucleotide sequence ID" value="NC_011134.1"/>
</dbReference>
<dbReference type="SMR" id="B4U2P9"/>
<dbReference type="KEGG" id="sez:Sez_0908"/>
<dbReference type="HOGENOM" id="CLU_166693_0_0_9"/>
<dbReference type="Proteomes" id="UP000001873">
    <property type="component" value="Chromosome"/>
</dbReference>
<dbReference type="Gene3D" id="1.10.220.80">
    <property type="entry name" value="BH2638-like"/>
    <property type="match status" value="1"/>
</dbReference>
<dbReference type="HAMAP" id="MF_01041">
    <property type="entry name" value="UPF0223"/>
    <property type="match status" value="1"/>
</dbReference>
<dbReference type="InterPro" id="IPR023324">
    <property type="entry name" value="BH2638-like_sf"/>
</dbReference>
<dbReference type="InterPro" id="IPR007920">
    <property type="entry name" value="UPF0223"/>
</dbReference>
<dbReference type="NCBIfam" id="NF003353">
    <property type="entry name" value="PRK04387.1"/>
    <property type="match status" value="1"/>
</dbReference>
<dbReference type="Pfam" id="PF05256">
    <property type="entry name" value="UPF0223"/>
    <property type="match status" value="1"/>
</dbReference>
<dbReference type="PIRSF" id="PIRSF037260">
    <property type="entry name" value="UPF0223"/>
    <property type="match status" value="1"/>
</dbReference>
<dbReference type="SUPFAM" id="SSF158504">
    <property type="entry name" value="BH2638-like"/>
    <property type="match status" value="1"/>
</dbReference>
<accession>B4U2P9</accession>
<feature type="chain" id="PRO_1000136029" description="UPF0223 protein Sez_0908">
    <location>
        <begin position="1"/>
        <end position="92"/>
    </location>
</feature>
<sequence>MSDHYHYPLDASWSTEEITSVLHFLNQVELAYEAKVRAEELLKSYAAYKEIVRSKSQEKQIDREFQQASGYSTYQAVKKAREIEKGFFSLGR</sequence>
<proteinExistence type="inferred from homology"/>
<name>Y908_STREM</name>
<evidence type="ECO:0000255" key="1">
    <source>
        <dbReference type="HAMAP-Rule" id="MF_01041"/>
    </source>
</evidence>
<gene>
    <name type="ordered locus">Sez_0908</name>
</gene>